<feature type="chain" id="PRO_0000080536" description="Beta-1,4-galactosyltransferase 3">
    <location>
        <begin position="1"/>
        <end position="395"/>
    </location>
</feature>
<feature type="topological domain" description="Cytoplasmic" evidence="3">
    <location>
        <begin position="1"/>
        <end position="10"/>
    </location>
</feature>
<feature type="transmembrane region" description="Helical; Signal-anchor for type II membrane protein" evidence="3">
    <location>
        <begin position="11"/>
        <end position="31"/>
    </location>
</feature>
<feature type="topological domain" description="Lumenal" evidence="3">
    <location>
        <begin position="32"/>
        <end position="395"/>
    </location>
</feature>
<feature type="region of interest" description="Disordered" evidence="4">
    <location>
        <begin position="341"/>
        <end position="395"/>
    </location>
</feature>
<feature type="binding site" evidence="1">
    <location>
        <begin position="132"/>
        <end position="136"/>
    </location>
    <ligand>
        <name>UDP-alpha-D-galactose</name>
        <dbReference type="ChEBI" id="CHEBI:66914"/>
    </ligand>
</feature>
<feature type="binding site" evidence="1">
    <location>
        <begin position="171"/>
        <end position="173"/>
    </location>
    <ligand>
        <name>UDP-alpha-D-galactose</name>
        <dbReference type="ChEBI" id="CHEBI:66914"/>
    </ligand>
</feature>
<feature type="binding site" evidence="1">
    <location>
        <begin position="198"/>
        <end position="199"/>
    </location>
    <ligand>
        <name>UDP-alpha-D-galactose</name>
        <dbReference type="ChEBI" id="CHEBI:66914"/>
    </ligand>
</feature>
<feature type="binding site" evidence="1">
    <location>
        <position position="199"/>
    </location>
    <ligand>
        <name>Mn(2+)</name>
        <dbReference type="ChEBI" id="CHEBI:29035"/>
    </ligand>
</feature>
<feature type="binding site" evidence="1">
    <location>
        <position position="228"/>
    </location>
    <ligand>
        <name>UDP-alpha-D-galactose</name>
        <dbReference type="ChEBI" id="CHEBI:66914"/>
    </ligand>
</feature>
<feature type="binding site" evidence="1">
    <location>
        <position position="260"/>
    </location>
    <ligand>
        <name>UDP-alpha-D-galactose</name>
        <dbReference type="ChEBI" id="CHEBI:66914"/>
    </ligand>
</feature>
<feature type="binding site" evidence="1">
    <location>
        <begin position="262"/>
        <end position="265"/>
    </location>
    <ligand>
        <name>N-acetyl-D-glucosamine</name>
        <dbReference type="ChEBI" id="CHEBI:506227"/>
    </ligand>
</feature>
<feature type="binding site" evidence="1">
    <location>
        <begin position="293"/>
        <end position="295"/>
    </location>
    <ligand>
        <name>UDP-alpha-D-galactose</name>
        <dbReference type="ChEBI" id="CHEBI:66914"/>
    </ligand>
</feature>
<feature type="binding site" evidence="1">
    <location>
        <position position="293"/>
    </location>
    <ligand>
        <name>Mn(2+)</name>
        <dbReference type="ChEBI" id="CHEBI:29035"/>
    </ligand>
</feature>
<feature type="binding site" evidence="1">
    <location>
        <position position="305"/>
    </location>
    <ligand>
        <name>N-acetyl-D-glucosamine</name>
        <dbReference type="ChEBI" id="CHEBI:506227"/>
    </ligand>
</feature>
<feature type="glycosylation site" description="N-linked (GlcNAc...) asparagine" evidence="3">
    <location>
        <position position="57"/>
    </location>
</feature>
<feature type="glycosylation site" description="N-linked (GlcNAc...) asparagine" evidence="3">
    <location>
        <position position="339"/>
    </location>
</feature>
<feature type="glycosylation site" description="N-linked (GlcNAc...) asparagine" evidence="3">
    <location>
        <position position="387"/>
    </location>
</feature>
<feature type="disulfide bond" evidence="1">
    <location>
        <begin position="79"/>
        <end position="121"/>
    </location>
</feature>
<feature type="disulfide bond" evidence="1">
    <location>
        <begin position="192"/>
        <end position="211"/>
    </location>
</feature>
<keyword id="KW-1015">Disulfide bond</keyword>
<keyword id="KW-0325">Glycoprotein</keyword>
<keyword id="KW-0328">Glycosyltransferase</keyword>
<keyword id="KW-0333">Golgi apparatus</keyword>
<keyword id="KW-0443">Lipid metabolism</keyword>
<keyword id="KW-0464">Manganese</keyword>
<keyword id="KW-0472">Membrane</keyword>
<keyword id="KW-0479">Metal-binding</keyword>
<keyword id="KW-1185">Reference proteome</keyword>
<keyword id="KW-0735">Signal-anchor</keyword>
<keyword id="KW-0808">Transferase</keyword>
<keyword id="KW-0812">Transmembrane</keyword>
<keyword id="KW-1133">Transmembrane helix</keyword>
<evidence type="ECO:0000250" key="1"/>
<evidence type="ECO:0000250" key="2">
    <source>
        <dbReference type="UniProtKB" id="O60512"/>
    </source>
</evidence>
<evidence type="ECO:0000255" key="3"/>
<evidence type="ECO:0000256" key="4">
    <source>
        <dbReference type="SAM" id="MobiDB-lite"/>
    </source>
</evidence>
<evidence type="ECO:0000305" key="5"/>
<accession>Q80WN8</accession>
<accession>G3HU17</accession>
<sequence length="395" mass="44060">MLRRLLERPCTLALLVGSQLAVMMYLSLGGFRSLSALFGRDQGPTFDYSHPRDVYSNLSHLPGAPVAAGASPAEALPFCPERSPFLVGPVSVSFSPVPSLAEIVERNPRVEPGGRYRPAGCEARSRTAIIVPHRAREHHLRLLLYHLHPFLQRQQLAYGIYVIHQAGNGMFNRAKLLNVGVREALRDEEWDCLFLHDVDLLPENDHNLYVCDPRGPRHVAVAMNKFGYSLPYPQYFGGVSALTPDQYLKMNGFPNEYWGWGGEDDDIATRVRLAGMKISRPPTSVGHYKMVKHRGDKGNEENPHRFDLLVRTQNSWTQDGMNSLTYQLLAKELGPLYTNITADIGTDPRGPRAPSGPRYPPGSSQAFRQEMLQRRPPARPGPLPTANHTAPHGSH</sequence>
<reference key="1">
    <citation type="journal article" date="2003" name="Biochemistry">
        <title>A mutation causing a reduced level of expression of six beta4-galactosyltransferase genes is the basis of the Lec19 CHO glycosylation mutant.</title>
        <authorList>
            <person name="Lee J."/>
            <person name="Park S.-H."/>
            <person name="Sundaram S."/>
            <person name="Raju T.S."/>
            <person name="Shaper N.L."/>
            <person name="Stanley P."/>
        </authorList>
    </citation>
    <scope>NUCLEOTIDE SEQUENCE [MRNA]</scope>
    <source>
        <tissue>Ovary</tissue>
    </source>
</reference>
<reference key="2">
    <citation type="journal article" date="2011" name="Nat. Biotechnol.">
        <title>The genomic sequence of the Chinese hamster ovary (CHO)-K1 cell line.</title>
        <authorList>
            <person name="Xu X."/>
            <person name="Nagarajan H."/>
            <person name="Lewis N.E."/>
            <person name="Pan S."/>
            <person name="Cai Z."/>
            <person name="Liu X."/>
            <person name="Chen W."/>
            <person name="Xie M."/>
            <person name="Wang W."/>
            <person name="Hammond S."/>
            <person name="Andersen M.R."/>
            <person name="Neff N."/>
            <person name="Passarelli B."/>
            <person name="Koh W."/>
            <person name="Fan H.C."/>
            <person name="Wang J."/>
            <person name="Gui Y."/>
            <person name="Lee K.H."/>
            <person name="Betenbaugh M.J."/>
            <person name="Quake S.R."/>
            <person name="Famili I."/>
            <person name="Palsson B.O."/>
            <person name="Wang J."/>
        </authorList>
    </citation>
    <scope>NUCLEOTIDE SEQUENCE [LARGE SCALE GENOMIC DNA]</scope>
</reference>
<reference key="3">
    <citation type="journal article" date="2013" name="Nat. Biotechnol.">
        <title>Chinese hamster genome sequenced from sorted chromosomes.</title>
        <authorList>
            <person name="Brinkrolf K."/>
            <person name="Rupp O."/>
            <person name="Laux H."/>
            <person name="Kollin F."/>
            <person name="Ernst W."/>
            <person name="Linke B."/>
            <person name="Kofler R."/>
            <person name="Romand S."/>
            <person name="Hesse F."/>
            <person name="Budach W.E."/>
            <person name="Galosy S."/>
            <person name="Muller D."/>
            <person name="Noll T."/>
            <person name="Wienberg J."/>
            <person name="Jostock T."/>
            <person name="Leonard M."/>
            <person name="Grillari J."/>
            <person name="Tauch A."/>
            <person name="Goesmann A."/>
            <person name="Helk B."/>
            <person name="Mott J.E."/>
            <person name="Puhler A."/>
            <person name="Borth N."/>
        </authorList>
    </citation>
    <scope>NUCLEOTIDE SEQUENCE [LARGE SCALE GENOMIC DNA]</scope>
</reference>
<dbReference type="EC" id="2.4.1.-" evidence="2"/>
<dbReference type="EC" id="2.4.1.38" evidence="2"/>
<dbReference type="EC" id="2.4.1.90" evidence="2"/>
<dbReference type="EC" id="2.4.1.275"/>
<dbReference type="EMBL" id="AY117537">
    <property type="protein sequence ID" value="AAM77196.1"/>
    <property type="molecule type" value="mRNA"/>
</dbReference>
<dbReference type="EMBL" id="JH000722">
    <property type="protein sequence ID" value="EGW08561.1"/>
    <property type="molecule type" value="Genomic_DNA"/>
</dbReference>
<dbReference type="EMBL" id="KE676296">
    <property type="protein sequence ID" value="ERE74030.1"/>
    <property type="molecule type" value="Genomic_DNA"/>
</dbReference>
<dbReference type="RefSeq" id="NP_001233706.1">
    <property type="nucleotide sequence ID" value="NM_001246777.2"/>
</dbReference>
<dbReference type="RefSeq" id="XP_007645568.1">
    <property type="nucleotide sequence ID" value="XM_007647378.2"/>
</dbReference>
<dbReference type="RefSeq" id="XP_007645569.1">
    <property type="nucleotide sequence ID" value="XM_007647379.2"/>
</dbReference>
<dbReference type="RefSeq" id="XP_007645570.1">
    <property type="nucleotide sequence ID" value="XM_007647380.2"/>
</dbReference>
<dbReference type="RefSeq" id="XP_007645571.1">
    <property type="nucleotide sequence ID" value="XM_007647381.1"/>
</dbReference>
<dbReference type="RefSeq" id="XP_007645572.1">
    <property type="nucleotide sequence ID" value="XM_007647382.2"/>
</dbReference>
<dbReference type="SMR" id="Q80WN8"/>
<dbReference type="CAZy" id="GT7">
    <property type="family name" value="Glycosyltransferase Family 7"/>
</dbReference>
<dbReference type="GlyCosmos" id="Q80WN8">
    <property type="glycosylation" value="3 sites, No reported glycans"/>
</dbReference>
<dbReference type="PaxDb" id="10029-NP_001233706.1"/>
<dbReference type="Ensembl" id="ENSCGRT00001031762.1">
    <property type="protein sequence ID" value="ENSCGRP00001027515.1"/>
    <property type="gene ID" value="ENSCGRG00001024503.1"/>
</dbReference>
<dbReference type="GeneID" id="100689346"/>
<dbReference type="KEGG" id="cge:100689346"/>
<dbReference type="CTD" id="8703"/>
<dbReference type="eggNOG" id="KOG3916">
    <property type="taxonomic scope" value="Eukaryota"/>
</dbReference>
<dbReference type="GeneTree" id="ENSGT00940000158549"/>
<dbReference type="InParanoid" id="G3HU17"/>
<dbReference type="OMA" id="CDPGGPR"/>
<dbReference type="OrthoDB" id="10016069at2759"/>
<dbReference type="UniPathway" id="UPA00378"/>
<dbReference type="Proteomes" id="UP000001075">
    <property type="component" value="Unassembled WGS sequence"/>
</dbReference>
<dbReference type="Proteomes" id="UP000030759">
    <property type="component" value="Unassembled WGS sequence"/>
</dbReference>
<dbReference type="Proteomes" id="UP000694386">
    <property type="component" value="Unplaced"/>
</dbReference>
<dbReference type="Proteomes" id="UP001108280">
    <property type="component" value="Chromosome 5"/>
</dbReference>
<dbReference type="GO" id="GO:0005829">
    <property type="term" value="C:cytosol"/>
    <property type="evidence" value="ECO:0007669"/>
    <property type="project" value="Ensembl"/>
</dbReference>
<dbReference type="GO" id="GO:0032580">
    <property type="term" value="C:Golgi cisterna membrane"/>
    <property type="evidence" value="ECO:0007669"/>
    <property type="project" value="UniProtKB-SubCell"/>
</dbReference>
<dbReference type="GO" id="GO:0003831">
    <property type="term" value="F:beta-N-acetylglucosaminylglycopeptide beta-1,4-galactosyltransferase activity"/>
    <property type="evidence" value="ECO:0007669"/>
    <property type="project" value="UniProtKB-EC"/>
</dbReference>
<dbReference type="GO" id="GO:0046872">
    <property type="term" value="F:metal ion binding"/>
    <property type="evidence" value="ECO:0007669"/>
    <property type="project" value="UniProtKB-KW"/>
</dbReference>
<dbReference type="GO" id="GO:0003945">
    <property type="term" value="F:N-acetyllactosamine synthase activity"/>
    <property type="evidence" value="ECO:0007669"/>
    <property type="project" value="UniProtKB-EC"/>
</dbReference>
<dbReference type="GO" id="GO:0005975">
    <property type="term" value="P:carbohydrate metabolic process"/>
    <property type="evidence" value="ECO:0007669"/>
    <property type="project" value="InterPro"/>
</dbReference>
<dbReference type="GO" id="GO:0006682">
    <property type="term" value="P:galactosylceramide biosynthetic process"/>
    <property type="evidence" value="ECO:0007669"/>
    <property type="project" value="Ensembl"/>
</dbReference>
<dbReference type="GO" id="GO:0006486">
    <property type="term" value="P:protein glycosylation"/>
    <property type="evidence" value="ECO:0007669"/>
    <property type="project" value="UniProtKB-UniPathway"/>
</dbReference>
<dbReference type="CDD" id="cd00899">
    <property type="entry name" value="b4GalT"/>
    <property type="match status" value="1"/>
</dbReference>
<dbReference type="FunFam" id="3.90.550.10:FF:000028">
    <property type="entry name" value="beta-1,4-galactosyltransferase 1"/>
    <property type="match status" value="1"/>
</dbReference>
<dbReference type="Gene3D" id="3.90.550.10">
    <property type="entry name" value="Spore Coat Polysaccharide Biosynthesis Protein SpsA, Chain A"/>
    <property type="match status" value="1"/>
</dbReference>
<dbReference type="InterPro" id="IPR003859">
    <property type="entry name" value="Galactosyl_T"/>
</dbReference>
<dbReference type="InterPro" id="IPR027791">
    <property type="entry name" value="Galactosyl_T_C"/>
</dbReference>
<dbReference type="InterPro" id="IPR027995">
    <property type="entry name" value="Galactosyl_T_N"/>
</dbReference>
<dbReference type="InterPro" id="IPR029044">
    <property type="entry name" value="Nucleotide-diphossugar_trans"/>
</dbReference>
<dbReference type="PANTHER" id="PTHR19300">
    <property type="entry name" value="BETA-1,4-GALACTOSYLTRANSFERASE"/>
    <property type="match status" value="1"/>
</dbReference>
<dbReference type="PANTHER" id="PTHR19300:SF33">
    <property type="entry name" value="BETA-1,4-GALACTOSYLTRANSFERASE 3"/>
    <property type="match status" value="1"/>
</dbReference>
<dbReference type="Pfam" id="PF02709">
    <property type="entry name" value="Glyco_transf_7C"/>
    <property type="match status" value="1"/>
</dbReference>
<dbReference type="Pfam" id="PF13733">
    <property type="entry name" value="Glyco_transf_7N"/>
    <property type="match status" value="1"/>
</dbReference>
<dbReference type="PRINTS" id="PR02050">
    <property type="entry name" value="B14GALTRFASE"/>
</dbReference>
<dbReference type="SUPFAM" id="SSF53448">
    <property type="entry name" value="Nucleotide-diphospho-sugar transferases"/>
    <property type="match status" value="1"/>
</dbReference>
<gene>
    <name type="primary">B4GALT3</name>
</gene>
<organism>
    <name type="scientific">Cricetulus griseus</name>
    <name type="common">Chinese hamster</name>
    <name type="synonym">Cricetulus barabensis griseus</name>
    <dbReference type="NCBI Taxonomy" id="10029"/>
    <lineage>
        <taxon>Eukaryota</taxon>
        <taxon>Metazoa</taxon>
        <taxon>Chordata</taxon>
        <taxon>Craniata</taxon>
        <taxon>Vertebrata</taxon>
        <taxon>Euteleostomi</taxon>
        <taxon>Mammalia</taxon>
        <taxon>Eutheria</taxon>
        <taxon>Euarchontoglires</taxon>
        <taxon>Glires</taxon>
        <taxon>Rodentia</taxon>
        <taxon>Myomorpha</taxon>
        <taxon>Muroidea</taxon>
        <taxon>Cricetidae</taxon>
        <taxon>Cricetinae</taxon>
        <taxon>Cricetulus</taxon>
    </lineage>
</organism>
<protein>
    <recommendedName>
        <fullName>Beta-1,4-galactosyltransferase 3</fullName>
        <shortName>Beta-1,4-GalTase 3</shortName>
        <shortName>Beta4Gal-T3</shortName>
        <shortName>b4Gal-T3</shortName>
        <ecNumber evidence="2">2.4.1.-</ecNumber>
    </recommendedName>
    <alternativeName>
        <fullName>Beta-N-acetylglucosaminyl-glycolipid beta-1,4-galactosyltransferase</fullName>
    </alternativeName>
    <alternativeName>
        <fullName>Beta-N-acetylglucosaminylglycopeptide beta-1,4-galactosyltransferase</fullName>
        <ecNumber evidence="2">2.4.1.38</ecNumber>
    </alternativeName>
    <alternativeName>
        <fullName>N-acetyllactosamine synthase</fullName>
        <ecNumber evidence="2">2.4.1.90</ecNumber>
    </alternativeName>
    <alternativeName>
        <fullName>Nal synthase</fullName>
    </alternativeName>
    <alternativeName>
        <fullName>Neolactotriaosylceramide beta-1,4-galactosyltransferase</fullName>
        <ecNumber>2.4.1.275</ecNumber>
    </alternativeName>
    <alternativeName>
        <fullName>UDP-Gal:beta-GlcNAc beta-1,4-galactosyltransferase 3</fullName>
    </alternativeName>
    <alternativeName>
        <fullName>UDP-galactose:beta-N-acetylglucosamine beta-1,4-galactosyltransferase 3</fullName>
    </alternativeName>
</protein>
<proteinExistence type="evidence at transcript level"/>
<name>B4GT3_CRIGR</name>
<comment type="function">
    <text evidence="2">Responsible for the synthesis of complex-type N-linked oligosaccharides in many glycoproteins as well as the carbohydrate moieties of glycolipids.</text>
</comment>
<comment type="catalytic activity">
    <reaction evidence="2">
        <text>an N-acetyl-beta-D-glucosaminyl derivative + UDP-alpha-D-galactose = a beta-D-galactosyl-(1-&gt;4)-N-acetyl-beta-D-glucosaminyl derivative + UDP + H(+)</text>
        <dbReference type="Rhea" id="RHEA:22932"/>
        <dbReference type="ChEBI" id="CHEBI:15378"/>
        <dbReference type="ChEBI" id="CHEBI:58223"/>
        <dbReference type="ChEBI" id="CHEBI:61631"/>
        <dbReference type="ChEBI" id="CHEBI:66914"/>
        <dbReference type="ChEBI" id="CHEBI:133507"/>
        <dbReference type="EC" id="2.4.1.38"/>
    </reaction>
    <physiologicalReaction direction="left-to-right" evidence="2">
        <dbReference type="Rhea" id="RHEA:22933"/>
    </physiologicalReaction>
</comment>
<comment type="catalytic activity">
    <reaction evidence="2">
        <text>N-acetyl-D-glucosamine + UDP-alpha-D-galactose = beta-D-galactosyl-(1-&gt;4)-N-acetyl-D-glucosamine + UDP + H(+)</text>
        <dbReference type="Rhea" id="RHEA:17745"/>
        <dbReference type="ChEBI" id="CHEBI:15378"/>
        <dbReference type="ChEBI" id="CHEBI:58223"/>
        <dbReference type="ChEBI" id="CHEBI:60152"/>
        <dbReference type="ChEBI" id="CHEBI:66914"/>
        <dbReference type="ChEBI" id="CHEBI:506227"/>
        <dbReference type="EC" id="2.4.1.90"/>
    </reaction>
    <physiologicalReaction direction="left-to-right" evidence="2">
        <dbReference type="Rhea" id="RHEA:17746"/>
    </physiologicalReaction>
</comment>
<comment type="catalytic activity">
    <reaction evidence="2">
        <text>a beta-D-GlcNAc-(1-&gt;3)-beta-D-Gal-(1-&gt;4)-beta-D-Glc-(1&lt;-&gt;1)-Cer(d18:1(4E)) + UDP-alpha-D-galactose = a neolactoside nLc4Cer(d18:1(4E)) + UDP + H(+)</text>
        <dbReference type="Rhea" id="RHEA:31499"/>
        <dbReference type="ChEBI" id="CHEBI:15378"/>
        <dbReference type="ChEBI" id="CHEBI:17006"/>
        <dbReference type="ChEBI" id="CHEBI:17103"/>
        <dbReference type="ChEBI" id="CHEBI:58223"/>
        <dbReference type="ChEBI" id="CHEBI:66914"/>
        <dbReference type="EC" id="2.4.1.275"/>
    </reaction>
    <physiologicalReaction direction="left-to-right" evidence="2">
        <dbReference type="Rhea" id="RHEA:31500"/>
    </physiologicalReaction>
</comment>
<comment type="catalytic activity">
    <reaction evidence="2">
        <text>a beta-D-glucosylceramide + UDP-alpha-D-galactose = a beta-D-galactosyl-(1-&gt;4)-beta-D-glucosyl-(1&lt;-&gt;1)-ceramide + UDP + H(+)</text>
        <dbReference type="Rhea" id="RHEA:62552"/>
        <dbReference type="ChEBI" id="CHEBI:15378"/>
        <dbReference type="ChEBI" id="CHEBI:58223"/>
        <dbReference type="ChEBI" id="CHEBI:66914"/>
        <dbReference type="ChEBI" id="CHEBI:79208"/>
        <dbReference type="ChEBI" id="CHEBI:83264"/>
    </reaction>
    <physiologicalReaction direction="left-to-right" evidence="2">
        <dbReference type="Rhea" id="RHEA:62553"/>
    </physiologicalReaction>
</comment>
<comment type="catalytic activity">
    <reaction evidence="2">
        <text>a neolactoside IV(3)-beta-GlcNAc-nLc4Cer + UDP-alpha-D-galactose = a neolactoside nLc6Cer + UDP + H(+)</text>
        <dbReference type="Rhea" id="RHEA:62548"/>
        <dbReference type="ChEBI" id="CHEBI:15378"/>
        <dbReference type="ChEBI" id="CHEBI:58223"/>
        <dbReference type="ChEBI" id="CHEBI:66914"/>
        <dbReference type="ChEBI" id="CHEBI:90357"/>
        <dbReference type="ChEBI" id="CHEBI:144378"/>
    </reaction>
    <physiologicalReaction direction="left-to-right" evidence="2">
        <dbReference type="Rhea" id="RHEA:62549"/>
    </physiologicalReaction>
</comment>
<comment type="cofactor">
    <cofactor evidence="1">
        <name>Mn(2+)</name>
        <dbReference type="ChEBI" id="CHEBI:29035"/>
    </cofactor>
</comment>
<comment type="pathway">
    <text evidence="2">Protein modification; protein glycosylation.</text>
</comment>
<comment type="subcellular location">
    <subcellularLocation>
        <location evidence="1">Golgi apparatus</location>
        <location evidence="1">Golgi stack membrane</location>
        <topology evidence="1">Single-pass type II membrane protein</topology>
    </subcellularLocation>
    <text evidence="1">Trans cisternae of Golgi stack.</text>
</comment>
<comment type="similarity">
    <text evidence="5">Belongs to the glycosyltransferase 7 family.</text>
</comment>